<protein>
    <recommendedName>
        <fullName evidence="1">Tripartite terminase subunit 1</fullName>
    </recommendedName>
</protein>
<organismHost>
    <name type="scientific">Homo sapiens</name>
    <name type="common">Human</name>
    <dbReference type="NCBI Taxonomy" id="9606"/>
</organismHost>
<dbReference type="EMBL" id="U43400">
    <property type="protein sequence ID" value="AAC54702.1"/>
    <property type="molecule type" value="Genomic_DNA"/>
</dbReference>
<dbReference type="PIR" id="T41942">
    <property type="entry name" value="T41942"/>
</dbReference>
<dbReference type="SMR" id="P52385"/>
<dbReference type="Proteomes" id="UP000009246">
    <property type="component" value="Segment"/>
</dbReference>
<dbReference type="GO" id="GO:0042025">
    <property type="term" value="C:host cell nucleus"/>
    <property type="evidence" value="ECO:0007669"/>
    <property type="project" value="UniProtKB-SubCell"/>
</dbReference>
<dbReference type="GO" id="GO:0005524">
    <property type="term" value="F:ATP binding"/>
    <property type="evidence" value="ECO:0007669"/>
    <property type="project" value="UniProtKB-KW"/>
</dbReference>
<dbReference type="GO" id="GO:0008270">
    <property type="term" value="F:zinc ion binding"/>
    <property type="evidence" value="ECO:0007669"/>
    <property type="project" value="UniProtKB-KW"/>
</dbReference>
<dbReference type="GO" id="GO:0019073">
    <property type="term" value="P:viral DNA genome packaging"/>
    <property type="evidence" value="ECO:0007669"/>
    <property type="project" value="InterPro"/>
</dbReference>
<dbReference type="HAMAP" id="MF_04014">
    <property type="entry name" value="HSV_TRM1"/>
    <property type="match status" value="1"/>
</dbReference>
<dbReference type="InterPro" id="IPR000501">
    <property type="entry name" value="UL28/UL56"/>
</dbReference>
<dbReference type="Pfam" id="PF01366">
    <property type="entry name" value="PRTP"/>
    <property type="match status" value="1"/>
</dbReference>
<proteinExistence type="inferred from homology"/>
<name>TRM1_HHV7J</name>
<reference key="1">
    <citation type="journal article" date="1996" name="J. Virol.">
        <title>Determination and analysis of the complete nucleotide sequence of human herpesvirus.</title>
        <authorList>
            <person name="Nicholas J."/>
        </authorList>
    </citation>
    <scope>NUCLEOTIDE SEQUENCE [LARGE SCALE GENOMIC DNA]</scope>
</reference>
<evidence type="ECO:0000255" key="1">
    <source>
        <dbReference type="HAMAP-Rule" id="MF_04014"/>
    </source>
</evidence>
<gene>
    <name evidence="1" type="primary">TRM1</name>
    <name type="ordered locus">U40</name>
</gene>
<accession>P52385</accession>
<feature type="chain" id="PRO_0000115884" description="Tripartite terminase subunit 1">
    <location>
        <begin position="1"/>
        <end position="721"/>
    </location>
</feature>
<feature type="zinc finger region" description="C3H1-type" evidence="1">
    <location>
        <begin position="189"/>
        <end position="217"/>
    </location>
</feature>
<feature type="binding site" evidence="1">
    <location>
        <begin position="625"/>
        <end position="632"/>
    </location>
    <ligand>
        <name>ATP</name>
        <dbReference type="ChEBI" id="CHEBI:30616"/>
    </ligand>
</feature>
<keyword id="KW-0067">ATP-binding</keyword>
<keyword id="KW-1048">Host nucleus</keyword>
<keyword id="KW-0426">Late protein</keyword>
<keyword id="KW-0479">Metal-binding</keyword>
<keyword id="KW-0547">Nucleotide-binding</keyword>
<keyword id="KW-1185">Reference proteome</keyword>
<keyword id="KW-0231">Viral genome packaging</keyword>
<keyword id="KW-1188">Viral release from host cell</keyword>
<keyword id="KW-0862">Zinc</keyword>
<keyword id="KW-0863">Zinc-finger</keyword>
<organism>
    <name type="scientific">Human herpesvirus 7 (strain JI)</name>
    <name type="common">HHV-7</name>
    <name type="synonym">Human T lymphotropic virus</name>
    <dbReference type="NCBI Taxonomy" id="57278"/>
    <lineage>
        <taxon>Viruses</taxon>
        <taxon>Duplodnaviria</taxon>
        <taxon>Heunggongvirae</taxon>
        <taxon>Peploviricota</taxon>
        <taxon>Herviviricetes</taxon>
        <taxon>Herpesvirales</taxon>
        <taxon>Orthoherpesviridae</taxon>
        <taxon>Betaherpesvirinae</taxon>
        <taxon>Roseolovirus</taxon>
        <taxon>Roseolovirus humanbeta7</taxon>
        <taxon>Human betaherpesvirus 7</taxon>
    </lineage>
</organism>
<comment type="function">
    <text evidence="1">Component of the molecular motor that translocates viral genomic DNA in empty capsid during DNA packaging. Forms a tripartite terminase complex together with TRM2 and TRM3 in the host cytoplasm. Once the complex reaches the host nucleus, it interacts with the capsid portal vertex. This portal forms a ring in which genomic DNA is translocated into the capsid. TRM1 carries an endonuclease activity that plays an important role for the cleavage of concatemeric viral DNA into unit length genomes.</text>
</comment>
<comment type="subunit">
    <text evidence="1">Associates with TRM2 and TRM3 to form the tripartite terminase complex. Interacts with portal protein.</text>
</comment>
<comment type="subcellular location">
    <subcellularLocation>
        <location evidence="1">Host nucleus</location>
    </subcellularLocation>
    <text evidence="1">Found associated with the external surface of the viral capsid during assembly and DNA packaging, but seems absent in extracellular mature virions.</text>
</comment>
<comment type="similarity">
    <text evidence="1">Belongs to the herpesviridae TRM1 protein family.</text>
</comment>
<sequence length="721" mass="83167">MNSLQSLCVLCSRLSECALELECLRFCDPVTLIPDMTNFRKNGVVIIHLFKTLFAELCHQNFNCASPVTIYLQILLKAMYNQVLLLDASIHQFLLDNDKQKYFENIFQLNECKQHLKLDLALNNYLTFSVDISTINDIEKLLCKMNCIFGLISPLDGINACSQIIEFLTILCGVCVVMKPEVFSETTTCLKCYEELSLVPNQGKSIRKRLAGKFCNHLTETHMVSNLEKNVDIIEKDLDFSTKQYGLVKEYMAKITNIFQQQLYSKPPHLQEAENTLINFDLFSKIPDTIYSLSEFTYWSKISESVIQKASITLNQLNLCHSLYADLQNEISKFLYGETIQDVFNFNEENVTNDDKLYIGSRFISPCRLVDIITNVSIKNLEEDPVFTKLAEEDEIQTKIKTLLNELENSAHETVPKKYVTHSMTQDHNLQQEIHIRKKAYYQKISESGYSKVMLCIKEQEALINKLMNINILGNHIFESLSKMMNAFANRQLQSLENFSADPFTYDDHLYIKNNLLSKKLPQELLPNLSQEMYRLLTGPLSNYHTASFPLSSNISMAYACDVADFLPHMKEDLAKCVEGTIYPENWMLCTYNKFFNFDGLHNINDMQRQMWNFIRELVLSVALYNDVFGKQLSIVKFGEETETVEKILLTFDSGSPLLFKRGTTTTKFNDLYSLLYFDLKTQCDPVQISQTKQVSHIPAPNLLDLCRQNENSIPECFYNF</sequence>